<protein>
    <recommendedName>
        <fullName>Interferon-induced GTP-binding protein Mx</fullName>
    </recommendedName>
    <alternativeName>
        <fullName>Interferon-inducible Mx protein</fullName>
    </alternativeName>
</protein>
<organism>
    <name type="scientific">Siniperca chuatsi</name>
    <name type="common">Mandarin fish</name>
    <dbReference type="NCBI Taxonomy" id="119488"/>
    <lineage>
        <taxon>Eukaryota</taxon>
        <taxon>Metazoa</taxon>
        <taxon>Chordata</taxon>
        <taxon>Craniata</taxon>
        <taxon>Vertebrata</taxon>
        <taxon>Euteleostomi</taxon>
        <taxon>Actinopterygii</taxon>
        <taxon>Neopterygii</taxon>
        <taxon>Teleostei</taxon>
        <taxon>Neoteleostei</taxon>
        <taxon>Acanthomorphata</taxon>
        <taxon>Eupercaria</taxon>
        <taxon>Centrarchiformes</taxon>
        <taxon>Centrarchoidei</taxon>
        <taxon>Sinipercidae</taxon>
        <taxon>Siniperca</taxon>
    </lineage>
</organism>
<dbReference type="EMBL" id="AY392097">
    <property type="protein sequence ID" value="AAQ91382.1"/>
    <property type="molecule type" value="mRNA"/>
</dbReference>
<dbReference type="SMR" id="Q6TN15"/>
<dbReference type="GO" id="GO:0005737">
    <property type="term" value="C:cytoplasm"/>
    <property type="evidence" value="ECO:0007669"/>
    <property type="project" value="UniProtKB-SubCell"/>
</dbReference>
<dbReference type="GO" id="GO:0005874">
    <property type="term" value="C:microtubule"/>
    <property type="evidence" value="ECO:0007669"/>
    <property type="project" value="TreeGrafter"/>
</dbReference>
<dbReference type="GO" id="GO:0005634">
    <property type="term" value="C:nucleus"/>
    <property type="evidence" value="ECO:0007669"/>
    <property type="project" value="TreeGrafter"/>
</dbReference>
<dbReference type="GO" id="GO:0005886">
    <property type="term" value="C:plasma membrane"/>
    <property type="evidence" value="ECO:0007669"/>
    <property type="project" value="TreeGrafter"/>
</dbReference>
<dbReference type="GO" id="GO:0098793">
    <property type="term" value="C:presynapse"/>
    <property type="evidence" value="ECO:0007669"/>
    <property type="project" value="GOC"/>
</dbReference>
<dbReference type="GO" id="GO:0005525">
    <property type="term" value="F:GTP binding"/>
    <property type="evidence" value="ECO:0007669"/>
    <property type="project" value="UniProtKB-KW"/>
</dbReference>
<dbReference type="GO" id="GO:0003924">
    <property type="term" value="F:GTPase activity"/>
    <property type="evidence" value="ECO:0007669"/>
    <property type="project" value="InterPro"/>
</dbReference>
<dbReference type="GO" id="GO:0008017">
    <property type="term" value="F:microtubule binding"/>
    <property type="evidence" value="ECO:0007669"/>
    <property type="project" value="TreeGrafter"/>
</dbReference>
<dbReference type="GO" id="GO:0051607">
    <property type="term" value="P:defense response to virus"/>
    <property type="evidence" value="ECO:0007669"/>
    <property type="project" value="TreeGrafter"/>
</dbReference>
<dbReference type="GO" id="GO:0031623">
    <property type="term" value="P:receptor internalization"/>
    <property type="evidence" value="ECO:0007669"/>
    <property type="project" value="TreeGrafter"/>
</dbReference>
<dbReference type="GO" id="GO:0016185">
    <property type="term" value="P:synaptic vesicle budding from presynaptic endocytic zone membrane"/>
    <property type="evidence" value="ECO:0007669"/>
    <property type="project" value="TreeGrafter"/>
</dbReference>
<dbReference type="CDD" id="cd08771">
    <property type="entry name" value="DLP_1"/>
    <property type="match status" value="1"/>
</dbReference>
<dbReference type="FunFam" id="1.20.120.1240:FF:000007">
    <property type="entry name" value="Interferon-induced GTP-binding protein Mx1"/>
    <property type="match status" value="1"/>
</dbReference>
<dbReference type="FunFam" id="3.40.50.300:FF:000621">
    <property type="entry name" value="Interferon-induced GTP-binding protein Mx1"/>
    <property type="match status" value="1"/>
</dbReference>
<dbReference type="Gene3D" id="1.20.120.1240">
    <property type="entry name" value="Dynamin, middle domain"/>
    <property type="match status" value="1"/>
</dbReference>
<dbReference type="Gene3D" id="3.40.50.300">
    <property type="entry name" value="P-loop containing nucleotide triphosphate hydrolases"/>
    <property type="match status" value="1"/>
</dbReference>
<dbReference type="InterPro" id="IPR022812">
    <property type="entry name" value="Dynamin"/>
</dbReference>
<dbReference type="InterPro" id="IPR001401">
    <property type="entry name" value="Dynamin_GTPase"/>
</dbReference>
<dbReference type="InterPro" id="IPR019762">
    <property type="entry name" value="Dynamin_GTPase_CS"/>
</dbReference>
<dbReference type="InterPro" id="IPR045063">
    <property type="entry name" value="Dynamin_N"/>
</dbReference>
<dbReference type="InterPro" id="IPR000375">
    <property type="entry name" value="Dynamin_stalk"/>
</dbReference>
<dbReference type="InterPro" id="IPR030381">
    <property type="entry name" value="G_DYNAMIN_dom"/>
</dbReference>
<dbReference type="InterPro" id="IPR003130">
    <property type="entry name" value="GED"/>
</dbReference>
<dbReference type="InterPro" id="IPR020850">
    <property type="entry name" value="GED_dom"/>
</dbReference>
<dbReference type="InterPro" id="IPR027417">
    <property type="entry name" value="P-loop_NTPase"/>
</dbReference>
<dbReference type="PANTHER" id="PTHR11566">
    <property type="entry name" value="DYNAMIN"/>
    <property type="match status" value="1"/>
</dbReference>
<dbReference type="PANTHER" id="PTHR11566:SF225">
    <property type="entry name" value="INTERFERON-INDUCED GTP-BINDING PROTEIN MX-RELATED"/>
    <property type="match status" value="1"/>
</dbReference>
<dbReference type="Pfam" id="PF01031">
    <property type="entry name" value="Dynamin_M"/>
    <property type="match status" value="1"/>
</dbReference>
<dbReference type="Pfam" id="PF00350">
    <property type="entry name" value="Dynamin_N"/>
    <property type="match status" value="1"/>
</dbReference>
<dbReference type="Pfam" id="PF02212">
    <property type="entry name" value="GED"/>
    <property type="match status" value="1"/>
</dbReference>
<dbReference type="PRINTS" id="PR00195">
    <property type="entry name" value="DYNAMIN"/>
</dbReference>
<dbReference type="SMART" id="SM00053">
    <property type="entry name" value="DYNc"/>
    <property type="match status" value="1"/>
</dbReference>
<dbReference type="SMART" id="SM00302">
    <property type="entry name" value="GED"/>
    <property type="match status" value="1"/>
</dbReference>
<dbReference type="SUPFAM" id="SSF52540">
    <property type="entry name" value="P-loop containing nucleoside triphosphate hydrolases"/>
    <property type="match status" value="1"/>
</dbReference>
<dbReference type="PROSITE" id="PS00410">
    <property type="entry name" value="G_DYNAMIN_1"/>
    <property type="match status" value="1"/>
</dbReference>
<dbReference type="PROSITE" id="PS51718">
    <property type="entry name" value="G_DYNAMIN_2"/>
    <property type="match status" value="1"/>
</dbReference>
<dbReference type="PROSITE" id="PS51388">
    <property type="entry name" value="GED"/>
    <property type="match status" value="1"/>
</dbReference>
<evidence type="ECO:0000250" key="1"/>
<evidence type="ECO:0000255" key="2"/>
<evidence type="ECO:0000255" key="3">
    <source>
        <dbReference type="PROSITE-ProRule" id="PRU00720"/>
    </source>
</evidence>
<evidence type="ECO:0000255" key="4">
    <source>
        <dbReference type="PROSITE-ProRule" id="PRU01055"/>
    </source>
</evidence>
<comment type="subcellular location">
    <subcellularLocation>
        <location evidence="1">Cytoplasm</location>
    </subcellularLocation>
</comment>
<comment type="induction">
    <text>By interferons.</text>
</comment>
<comment type="similarity">
    <text evidence="4">Belongs to the TRAFAC class dynamin-like GTPase superfamily. Dynamin/Fzo/YdjA family.</text>
</comment>
<reference key="1">
    <citation type="submission" date="2003-09" db="EMBL/GenBank/DDBJ databases">
        <title>The cDNA cloning and sequence analysis of mandarinfish Mx gene.</title>
        <authorList>
            <person name="Wu H."/>
            <person name="Bai J."/>
            <person name="Lao H."/>
            <person name="Ye X."/>
            <person name="Jian Q."/>
            <person name="Luo J."/>
        </authorList>
    </citation>
    <scope>NUCLEOTIDE SEQUENCE [MRNA]</scope>
</reference>
<name>MX_SINCH</name>
<feature type="chain" id="PRO_0000292876" description="Interferon-induced GTP-binding protein Mx">
    <location>
        <begin position="1"/>
        <end position="626"/>
    </location>
</feature>
<feature type="domain" description="Dynamin-type G" evidence="4">
    <location>
        <begin position="30"/>
        <end position="303"/>
    </location>
</feature>
<feature type="domain" description="GED" evidence="3">
    <location>
        <begin position="540"/>
        <end position="626"/>
    </location>
</feature>
<feature type="region of interest" description="G1 motif" evidence="4">
    <location>
        <begin position="40"/>
        <end position="47"/>
    </location>
</feature>
<feature type="region of interest" description="G2 motif" evidence="4">
    <location>
        <begin position="65"/>
        <end position="67"/>
    </location>
</feature>
<feature type="region of interest" description="G3 motif" evidence="4">
    <location>
        <begin position="141"/>
        <end position="144"/>
    </location>
</feature>
<feature type="region of interest" description="G4 motif" evidence="4">
    <location>
        <begin position="210"/>
        <end position="213"/>
    </location>
</feature>
<feature type="region of interest" description="G5 motif" evidence="4">
    <location>
        <begin position="242"/>
        <end position="245"/>
    </location>
</feature>
<feature type="binding site" evidence="2">
    <location>
        <begin position="40"/>
        <end position="47"/>
    </location>
    <ligand>
        <name>GTP</name>
        <dbReference type="ChEBI" id="CHEBI:37565"/>
    </ligand>
</feature>
<feature type="binding site" evidence="2">
    <location>
        <begin position="141"/>
        <end position="145"/>
    </location>
    <ligand>
        <name>GTP</name>
        <dbReference type="ChEBI" id="CHEBI:37565"/>
    </ligand>
</feature>
<feature type="binding site" evidence="2">
    <location>
        <begin position="210"/>
        <end position="213"/>
    </location>
    <ligand>
        <name>GTP</name>
        <dbReference type="ChEBI" id="CHEBI:37565"/>
    </ligand>
</feature>
<accession>Q6TN15</accession>
<proteinExistence type="evidence at transcript level"/>
<sequence length="626" mass="71431">MNTLNQQYEEKVRPCIDLIDSLRSLGVEKDLALPAIAVIGDQSSGKSSVLEALSGVALPRGSGIVTRCPLELKMKRKKEGEEWYGKISYQNHEEEIEDPADVEKKIREAQDEMAGVGVGISDDLISLEIGSPGVPDLTLIDLPGIARVAVKGQPENIGDQIKRLIQTFITKQETISLVVVPCNVDIATTEALNMAQRVDPDGERTLGILTKPDLVDKGTEDTVVEIVHNEVIHLKKGYMIVKCRGQKEITERVSLTEAIERETAFFREHVYFHTLYNEGHATVPKLAEKLTLELVHHIEKSLPRLEEQIEEKLTQTRAELERYGNGPPSDAAEKLIFLIDKVTAFTQDAISLTTGEELKCGDRLNVFSMLRREFGQWNAHLSRSGEIFNKKIEKEVEEYEERYRGRELPGFINYKTFEVMVKEQIKQLEEPAVKRLKDVGDAVRKLLVQLAQSSFTGFPNLVKIAKARIEAIKQEKESTAESTLRTQFKMELLVYSQDRTYSSSLSDRKTEEDEEEDKRKVKTFHKERSILYRMDNHATLQELMLHLKSYYKIASQRLADQIPLVIRYQMLQESASQLHREMMQVLQDKENLEFLLKEDSDIGSKRAALQSRLKRLMKARAYLVEF</sequence>
<gene>
    <name type="primary">mx</name>
</gene>
<keyword id="KW-0963">Cytoplasm</keyword>
<keyword id="KW-0342">GTP-binding</keyword>
<keyword id="KW-0547">Nucleotide-binding</keyword>